<accession>C4K1P6</accession>
<comment type="function">
    <text evidence="1">Catalyzes the GTP-dependent ribosomal translocation step during translation elongation. During this step, the ribosome changes from the pre-translocational (PRE) to the post-translocational (POST) state as the newly formed A-site-bound peptidyl-tRNA and P-site-bound deacylated tRNA move to the P and E sites, respectively. Catalyzes the coordinated movement of the two tRNA molecules, the mRNA and conformational changes in the ribosome.</text>
</comment>
<comment type="subcellular location">
    <subcellularLocation>
        <location evidence="1">Cytoplasm</location>
    </subcellularLocation>
</comment>
<comment type="similarity">
    <text evidence="1">Belongs to the TRAFAC class translation factor GTPase superfamily. Classic translation factor GTPase family. EF-G/EF-2 subfamily.</text>
</comment>
<gene>
    <name evidence="1" type="primary">fusA</name>
    <name type="ordered locus">RPR_03990</name>
</gene>
<feature type="chain" id="PRO_1000202311" description="Elongation factor G">
    <location>
        <begin position="1"/>
        <end position="699"/>
    </location>
</feature>
<feature type="domain" description="tr-type G">
    <location>
        <begin position="8"/>
        <end position="283"/>
    </location>
</feature>
<feature type="binding site" evidence="1">
    <location>
        <begin position="17"/>
        <end position="24"/>
    </location>
    <ligand>
        <name>GTP</name>
        <dbReference type="ChEBI" id="CHEBI:37565"/>
    </ligand>
</feature>
<feature type="binding site" evidence="1">
    <location>
        <begin position="81"/>
        <end position="85"/>
    </location>
    <ligand>
        <name>GTP</name>
        <dbReference type="ChEBI" id="CHEBI:37565"/>
    </ligand>
</feature>
<feature type="binding site" evidence="1">
    <location>
        <begin position="135"/>
        <end position="138"/>
    </location>
    <ligand>
        <name>GTP</name>
        <dbReference type="ChEBI" id="CHEBI:37565"/>
    </ligand>
</feature>
<name>EFG_RICPU</name>
<keyword id="KW-0963">Cytoplasm</keyword>
<keyword id="KW-0251">Elongation factor</keyword>
<keyword id="KW-0342">GTP-binding</keyword>
<keyword id="KW-0547">Nucleotide-binding</keyword>
<keyword id="KW-0648">Protein biosynthesis</keyword>
<evidence type="ECO:0000255" key="1">
    <source>
        <dbReference type="HAMAP-Rule" id="MF_00054"/>
    </source>
</evidence>
<dbReference type="EMBL" id="CP001227">
    <property type="protein sequence ID" value="ACR47496.1"/>
    <property type="molecule type" value="Genomic_DNA"/>
</dbReference>
<dbReference type="RefSeq" id="WP_012736730.1">
    <property type="nucleotide sequence ID" value="NC_012730.1"/>
</dbReference>
<dbReference type="SMR" id="C4K1P6"/>
<dbReference type="KEGG" id="rpk:RPR_03990"/>
<dbReference type="HOGENOM" id="CLU_002794_4_1_5"/>
<dbReference type="Proteomes" id="UP000005015">
    <property type="component" value="Chromosome"/>
</dbReference>
<dbReference type="GO" id="GO:0005737">
    <property type="term" value="C:cytoplasm"/>
    <property type="evidence" value="ECO:0007669"/>
    <property type="project" value="UniProtKB-SubCell"/>
</dbReference>
<dbReference type="GO" id="GO:0005525">
    <property type="term" value="F:GTP binding"/>
    <property type="evidence" value="ECO:0007669"/>
    <property type="project" value="UniProtKB-UniRule"/>
</dbReference>
<dbReference type="GO" id="GO:0003924">
    <property type="term" value="F:GTPase activity"/>
    <property type="evidence" value="ECO:0007669"/>
    <property type="project" value="InterPro"/>
</dbReference>
<dbReference type="GO" id="GO:0003746">
    <property type="term" value="F:translation elongation factor activity"/>
    <property type="evidence" value="ECO:0007669"/>
    <property type="project" value="UniProtKB-UniRule"/>
</dbReference>
<dbReference type="GO" id="GO:0032790">
    <property type="term" value="P:ribosome disassembly"/>
    <property type="evidence" value="ECO:0007669"/>
    <property type="project" value="TreeGrafter"/>
</dbReference>
<dbReference type="CDD" id="cd01886">
    <property type="entry name" value="EF-G"/>
    <property type="match status" value="1"/>
</dbReference>
<dbReference type="CDD" id="cd16262">
    <property type="entry name" value="EFG_III"/>
    <property type="match status" value="1"/>
</dbReference>
<dbReference type="CDD" id="cd01434">
    <property type="entry name" value="EFG_mtEFG1_IV"/>
    <property type="match status" value="1"/>
</dbReference>
<dbReference type="CDD" id="cd03713">
    <property type="entry name" value="EFG_mtEFG_C"/>
    <property type="match status" value="1"/>
</dbReference>
<dbReference type="CDD" id="cd04088">
    <property type="entry name" value="EFG_mtEFG_II"/>
    <property type="match status" value="1"/>
</dbReference>
<dbReference type="FunFam" id="2.40.30.10:FF:000006">
    <property type="entry name" value="Elongation factor G"/>
    <property type="match status" value="1"/>
</dbReference>
<dbReference type="FunFam" id="3.30.230.10:FF:000003">
    <property type="entry name" value="Elongation factor G"/>
    <property type="match status" value="1"/>
</dbReference>
<dbReference type="FunFam" id="3.30.70.240:FF:000001">
    <property type="entry name" value="Elongation factor G"/>
    <property type="match status" value="1"/>
</dbReference>
<dbReference type="FunFam" id="3.30.70.870:FF:000001">
    <property type="entry name" value="Elongation factor G"/>
    <property type="match status" value="1"/>
</dbReference>
<dbReference type="FunFam" id="3.40.50.300:FF:000029">
    <property type="entry name" value="Elongation factor G"/>
    <property type="match status" value="1"/>
</dbReference>
<dbReference type="Gene3D" id="3.30.230.10">
    <property type="match status" value="1"/>
</dbReference>
<dbReference type="Gene3D" id="3.30.70.240">
    <property type="match status" value="1"/>
</dbReference>
<dbReference type="Gene3D" id="3.30.70.870">
    <property type="entry name" value="Elongation Factor G (Translational Gtpase), domain 3"/>
    <property type="match status" value="1"/>
</dbReference>
<dbReference type="Gene3D" id="3.40.50.300">
    <property type="entry name" value="P-loop containing nucleotide triphosphate hydrolases"/>
    <property type="match status" value="1"/>
</dbReference>
<dbReference type="Gene3D" id="2.40.30.10">
    <property type="entry name" value="Translation factors"/>
    <property type="match status" value="1"/>
</dbReference>
<dbReference type="HAMAP" id="MF_00054_B">
    <property type="entry name" value="EF_G_EF_2_B"/>
    <property type="match status" value="1"/>
</dbReference>
<dbReference type="InterPro" id="IPR053905">
    <property type="entry name" value="EF-G-like_DII"/>
</dbReference>
<dbReference type="InterPro" id="IPR041095">
    <property type="entry name" value="EFG_II"/>
</dbReference>
<dbReference type="InterPro" id="IPR009022">
    <property type="entry name" value="EFG_III"/>
</dbReference>
<dbReference type="InterPro" id="IPR035647">
    <property type="entry name" value="EFG_III/V"/>
</dbReference>
<dbReference type="InterPro" id="IPR047872">
    <property type="entry name" value="EFG_IV"/>
</dbReference>
<dbReference type="InterPro" id="IPR035649">
    <property type="entry name" value="EFG_V"/>
</dbReference>
<dbReference type="InterPro" id="IPR000640">
    <property type="entry name" value="EFG_V-like"/>
</dbReference>
<dbReference type="InterPro" id="IPR031157">
    <property type="entry name" value="G_TR_CS"/>
</dbReference>
<dbReference type="InterPro" id="IPR027417">
    <property type="entry name" value="P-loop_NTPase"/>
</dbReference>
<dbReference type="InterPro" id="IPR020568">
    <property type="entry name" value="Ribosomal_Su5_D2-typ_SF"/>
</dbReference>
<dbReference type="InterPro" id="IPR014721">
    <property type="entry name" value="Ribsml_uS5_D2-typ_fold_subgr"/>
</dbReference>
<dbReference type="InterPro" id="IPR005225">
    <property type="entry name" value="Small_GTP-bd"/>
</dbReference>
<dbReference type="InterPro" id="IPR000795">
    <property type="entry name" value="T_Tr_GTP-bd_dom"/>
</dbReference>
<dbReference type="InterPro" id="IPR009000">
    <property type="entry name" value="Transl_B-barrel_sf"/>
</dbReference>
<dbReference type="InterPro" id="IPR004540">
    <property type="entry name" value="Transl_elong_EFG/EF2"/>
</dbReference>
<dbReference type="InterPro" id="IPR005517">
    <property type="entry name" value="Transl_elong_EFG/EF2_IV"/>
</dbReference>
<dbReference type="NCBIfam" id="TIGR00484">
    <property type="entry name" value="EF-G"/>
    <property type="match status" value="1"/>
</dbReference>
<dbReference type="NCBIfam" id="NF009381">
    <property type="entry name" value="PRK12740.1-5"/>
    <property type="match status" value="1"/>
</dbReference>
<dbReference type="NCBIfam" id="TIGR00231">
    <property type="entry name" value="small_GTP"/>
    <property type="match status" value="1"/>
</dbReference>
<dbReference type="PANTHER" id="PTHR43261:SF1">
    <property type="entry name" value="RIBOSOME-RELEASING FACTOR 2, MITOCHONDRIAL"/>
    <property type="match status" value="1"/>
</dbReference>
<dbReference type="PANTHER" id="PTHR43261">
    <property type="entry name" value="TRANSLATION ELONGATION FACTOR G-RELATED"/>
    <property type="match status" value="1"/>
</dbReference>
<dbReference type="Pfam" id="PF22042">
    <property type="entry name" value="EF-G_D2"/>
    <property type="match status" value="1"/>
</dbReference>
<dbReference type="Pfam" id="PF00679">
    <property type="entry name" value="EFG_C"/>
    <property type="match status" value="1"/>
</dbReference>
<dbReference type="Pfam" id="PF14492">
    <property type="entry name" value="EFG_III"/>
    <property type="match status" value="1"/>
</dbReference>
<dbReference type="Pfam" id="PF03764">
    <property type="entry name" value="EFG_IV"/>
    <property type="match status" value="1"/>
</dbReference>
<dbReference type="Pfam" id="PF00009">
    <property type="entry name" value="GTP_EFTU"/>
    <property type="match status" value="1"/>
</dbReference>
<dbReference type="PRINTS" id="PR00315">
    <property type="entry name" value="ELONGATNFCT"/>
</dbReference>
<dbReference type="SMART" id="SM00838">
    <property type="entry name" value="EFG_C"/>
    <property type="match status" value="1"/>
</dbReference>
<dbReference type="SMART" id="SM00889">
    <property type="entry name" value="EFG_IV"/>
    <property type="match status" value="1"/>
</dbReference>
<dbReference type="SUPFAM" id="SSF54980">
    <property type="entry name" value="EF-G C-terminal domain-like"/>
    <property type="match status" value="2"/>
</dbReference>
<dbReference type="SUPFAM" id="SSF52540">
    <property type="entry name" value="P-loop containing nucleoside triphosphate hydrolases"/>
    <property type="match status" value="1"/>
</dbReference>
<dbReference type="SUPFAM" id="SSF54211">
    <property type="entry name" value="Ribosomal protein S5 domain 2-like"/>
    <property type="match status" value="1"/>
</dbReference>
<dbReference type="SUPFAM" id="SSF50447">
    <property type="entry name" value="Translation proteins"/>
    <property type="match status" value="1"/>
</dbReference>
<dbReference type="PROSITE" id="PS00301">
    <property type="entry name" value="G_TR_1"/>
    <property type="match status" value="1"/>
</dbReference>
<dbReference type="PROSITE" id="PS51722">
    <property type="entry name" value="G_TR_2"/>
    <property type="match status" value="1"/>
</dbReference>
<organism>
    <name type="scientific">Rickettsia peacockii (strain Rustic)</name>
    <dbReference type="NCBI Taxonomy" id="562019"/>
    <lineage>
        <taxon>Bacteria</taxon>
        <taxon>Pseudomonadati</taxon>
        <taxon>Pseudomonadota</taxon>
        <taxon>Alphaproteobacteria</taxon>
        <taxon>Rickettsiales</taxon>
        <taxon>Rickettsiaceae</taxon>
        <taxon>Rickettsieae</taxon>
        <taxon>Rickettsia</taxon>
        <taxon>spotted fever group</taxon>
    </lineage>
</organism>
<sequence length="699" mass="77722">MSKINKLEHIRNIGICAHIDAGKTTTTERILYYTGKSHKIGEVHEGGATMDWMEQEQERGITITSAATTCRWQDKIINIIDTPGHVDFTIEVERSLRVLDGAVAVFDGVAGVEPQSETVWRQADKYNVPRMCFVNKMDRMGADFYRCVEMLKDRLGAKPLVIQLPVGIEENFKGIIDLIKMKAVIWKDEALGAEYFEEDIPADMKDKAEEYRAKLLDMVVELDDHVMEKYLSGEEVTAEEIKRLIRKGTISAAFYPVLCGSAFKNKGVQPLLDAVVDFLPSPIDIGIVKGMEVSTGEEKDFPISVTEPFAALAFKIMNDPFVGSLTFIRIYSGKITSGTTVINTVKNKREKIGRMLLMHANNREDVKEASAGDIVALAGLKDTTTGDTLSDIDQQVILERMEFPEPVIELAVEPKSTADQEKMGLALSRLAAEDPSFRVSTDYETGQTVIKGMGELHLEIIIDRMRREFKVEANIGAPQVAYRETITKVCEIDYTHKKQSGGAGQFARVKIIFEPLKEVKDLKDEDKNKIFVFESKIIGGAVPKEYIPGVEKGLNNIRETGVIAGYPMIDFKATLVDGAFHDVDSSVLAFEIAAKAAFREGMPKGNPKLLEPIMQVEVITPDEYMGDIIGDLNSRRGQIQSMDPRGNAQVVTANIPLAEMFGYVNTLRSLSQGRAQFSMIFSHYDQVPSQVADIIKAKK</sequence>
<reference key="1">
    <citation type="journal article" date="2009" name="PLoS ONE">
        <title>Genome sequence of the endosymbiont Rickettsia peacockii and comparison with virulent Rickettsia rickettsii: identification of virulence factors.</title>
        <authorList>
            <person name="Felsheim R.F."/>
            <person name="Kurtti T.J."/>
            <person name="Munderloh U.G."/>
        </authorList>
    </citation>
    <scope>NUCLEOTIDE SEQUENCE [LARGE SCALE GENOMIC DNA]</scope>
    <source>
        <strain>Rustic</strain>
    </source>
</reference>
<protein>
    <recommendedName>
        <fullName evidence="1">Elongation factor G</fullName>
        <shortName evidence="1">EF-G</shortName>
    </recommendedName>
</protein>
<proteinExistence type="inferred from homology"/>